<evidence type="ECO:0000255" key="1">
    <source>
        <dbReference type="HAMAP-Rule" id="MF_00722"/>
    </source>
</evidence>
<accession>Q0RDC6</accession>
<keyword id="KW-0963">Cytoplasm</keyword>
<keyword id="KW-0238">DNA-binding</keyword>
<keyword id="KW-0255">Endonuclease</keyword>
<keyword id="KW-0378">Hydrolase</keyword>
<keyword id="KW-0540">Nuclease</keyword>
<keyword id="KW-1185">Reference proteome</keyword>
<gene>
    <name evidence="1" type="primary">nucS</name>
    <name type="ordered locus">FRAAL5919</name>
</gene>
<reference key="1">
    <citation type="journal article" date="2007" name="Genome Res.">
        <title>Genome characteristics of facultatively symbiotic Frankia sp. strains reflect host range and host plant biogeography.</title>
        <authorList>
            <person name="Normand P."/>
            <person name="Lapierre P."/>
            <person name="Tisa L.S."/>
            <person name="Gogarten J.P."/>
            <person name="Alloisio N."/>
            <person name="Bagnarol E."/>
            <person name="Bassi C.A."/>
            <person name="Berry A.M."/>
            <person name="Bickhart D.M."/>
            <person name="Choisne N."/>
            <person name="Couloux A."/>
            <person name="Cournoyer B."/>
            <person name="Cruveiller S."/>
            <person name="Daubin V."/>
            <person name="Demange N."/>
            <person name="Francino M.P."/>
            <person name="Goltsman E."/>
            <person name="Huang Y."/>
            <person name="Kopp O.R."/>
            <person name="Labarre L."/>
            <person name="Lapidus A."/>
            <person name="Lavire C."/>
            <person name="Marechal J."/>
            <person name="Martinez M."/>
            <person name="Mastronunzio J.E."/>
            <person name="Mullin B.C."/>
            <person name="Niemann J."/>
            <person name="Pujic P."/>
            <person name="Rawnsley T."/>
            <person name="Rouy Z."/>
            <person name="Schenowitz C."/>
            <person name="Sellstedt A."/>
            <person name="Tavares F."/>
            <person name="Tomkins J.P."/>
            <person name="Vallenet D."/>
            <person name="Valverde C."/>
            <person name="Wall L.G."/>
            <person name="Wang Y."/>
            <person name="Medigue C."/>
            <person name="Benson D.R."/>
        </authorList>
    </citation>
    <scope>NUCLEOTIDE SEQUENCE [LARGE SCALE GENOMIC DNA]</scope>
    <source>
        <strain>DSM 45986 / CECT 9034 / ACN14a</strain>
    </source>
</reference>
<organism>
    <name type="scientific">Frankia alni (strain DSM 45986 / CECT 9034 / ACN14a)</name>
    <dbReference type="NCBI Taxonomy" id="326424"/>
    <lineage>
        <taxon>Bacteria</taxon>
        <taxon>Bacillati</taxon>
        <taxon>Actinomycetota</taxon>
        <taxon>Actinomycetes</taxon>
        <taxon>Frankiales</taxon>
        <taxon>Frankiaceae</taxon>
        <taxon>Frankia</taxon>
    </lineage>
</organism>
<feature type="chain" id="PRO_1000045830" description="Endonuclease NucS">
    <location>
        <begin position="1"/>
        <end position="220"/>
    </location>
</feature>
<dbReference type="EC" id="3.1.-.-" evidence="1"/>
<dbReference type="EMBL" id="CT573213">
    <property type="protein sequence ID" value="CAJ64544.1"/>
    <property type="molecule type" value="Genomic_DNA"/>
</dbReference>
<dbReference type="RefSeq" id="WP_011606979.1">
    <property type="nucleotide sequence ID" value="NC_008278.1"/>
</dbReference>
<dbReference type="SMR" id="Q0RDC6"/>
<dbReference type="STRING" id="326424.FRAAL5919"/>
<dbReference type="KEGG" id="fal:FRAAL5919"/>
<dbReference type="eggNOG" id="COG1637">
    <property type="taxonomic scope" value="Bacteria"/>
</dbReference>
<dbReference type="HOGENOM" id="CLU_069350_0_0_11"/>
<dbReference type="OrthoDB" id="3344925at2"/>
<dbReference type="Proteomes" id="UP000000657">
    <property type="component" value="Chromosome"/>
</dbReference>
<dbReference type="GO" id="GO:0005737">
    <property type="term" value="C:cytoplasm"/>
    <property type="evidence" value="ECO:0007669"/>
    <property type="project" value="UniProtKB-SubCell"/>
</dbReference>
<dbReference type="GO" id="GO:0003677">
    <property type="term" value="F:DNA binding"/>
    <property type="evidence" value="ECO:0007669"/>
    <property type="project" value="UniProtKB-KW"/>
</dbReference>
<dbReference type="GO" id="GO:0000014">
    <property type="term" value="F:single-stranded DNA endodeoxyribonuclease activity"/>
    <property type="evidence" value="ECO:0007669"/>
    <property type="project" value="UniProtKB-UniRule"/>
</dbReference>
<dbReference type="CDD" id="cd22341">
    <property type="entry name" value="NucS-like"/>
    <property type="match status" value="1"/>
</dbReference>
<dbReference type="Gene3D" id="2.70.180.20">
    <property type="match status" value="1"/>
</dbReference>
<dbReference type="Gene3D" id="3.40.1350.10">
    <property type="match status" value="1"/>
</dbReference>
<dbReference type="HAMAP" id="MF_00722">
    <property type="entry name" value="NucS"/>
    <property type="match status" value="1"/>
</dbReference>
<dbReference type="InterPro" id="IPR002793">
    <property type="entry name" value="Endonuclease_NucS"/>
</dbReference>
<dbReference type="InterPro" id="IPR048301">
    <property type="entry name" value="NucS_C"/>
</dbReference>
<dbReference type="InterPro" id="IPR048302">
    <property type="entry name" value="NucS_N"/>
</dbReference>
<dbReference type="InterPro" id="IPR049173">
    <property type="entry name" value="NucS_N_sf"/>
</dbReference>
<dbReference type="InterPro" id="IPR011856">
    <property type="entry name" value="tRNA_endonuc-like_dom_sf"/>
</dbReference>
<dbReference type="NCBIfam" id="NF002876">
    <property type="entry name" value="PRK03298.1"/>
    <property type="match status" value="1"/>
</dbReference>
<dbReference type="PANTHER" id="PTHR38814">
    <property type="entry name" value="ENDONUCLEASE NUCS"/>
    <property type="match status" value="1"/>
</dbReference>
<dbReference type="PANTHER" id="PTHR38814:SF1">
    <property type="entry name" value="ENDONUCLEASE NUCS"/>
    <property type="match status" value="1"/>
</dbReference>
<dbReference type="Pfam" id="PF01939">
    <property type="entry name" value="NucS_C"/>
    <property type="match status" value="1"/>
</dbReference>
<dbReference type="Pfam" id="PF21003">
    <property type="entry name" value="NucS_N"/>
    <property type="match status" value="1"/>
</dbReference>
<name>NUCS_FRAAA</name>
<proteinExistence type="inferred from homology"/>
<comment type="function">
    <text evidence="1">Cleaves both 3' and 5' ssDNA extremities of branched DNA structures.</text>
</comment>
<comment type="subcellular location">
    <subcellularLocation>
        <location evidence="1">Cytoplasm</location>
    </subcellularLocation>
</comment>
<comment type="similarity">
    <text evidence="1">Belongs to the NucS endonuclease family.</text>
</comment>
<sequence length="220" mass="23846">MRLVIARCSVDYVGRLTAHLPSAVRLVLVKADGSVSIHADGRAYKPLNWMSPPCVIAEESGVWRVTNKAAEQLVITLEEILHDSSHELGVDPGLRKDGVEAHLQVLLADRPDAIAPGLTLIRREYETGIGPVDLLCRDSDGSTVAVEIKRKGEIDGVEQLTRYLVRLDADPALPHPVRGILAAQSITPQARLLAADRGLGCAVVDYDELRGLEPSIPTLF</sequence>
<protein>
    <recommendedName>
        <fullName evidence="1">Endonuclease NucS</fullName>
        <ecNumber evidence="1">3.1.-.-</ecNumber>
    </recommendedName>
</protein>